<comment type="function">
    <text evidence="1">Negatively regulates transcription of bacterial ribonucleotide reductase nrd genes and operons by binding to NrdR-boxes.</text>
</comment>
<comment type="cofactor">
    <cofactor evidence="1">
        <name>Zn(2+)</name>
        <dbReference type="ChEBI" id="CHEBI:29105"/>
    </cofactor>
    <text evidence="1">Binds 1 zinc ion.</text>
</comment>
<comment type="similarity">
    <text evidence="1">Belongs to the NrdR family.</text>
</comment>
<comment type="sequence caution" evidence="2">
    <conflict type="erroneous initiation">
        <sequence resource="EMBL-CDS" id="ABI55729"/>
    </conflict>
</comment>
<evidence type="ECO:0000255" key="1">
    <source>
        <dbReference type="HAMAP-Rule" id="MF_00440"/>
    </source>
</evidence>
<evidence type="ECO:0000305" key="2"/>
<proteinExistence type="inferred from homology"/>
<keyword id="KW-0067">ATP-binding</keyword>
<keyword id="KW-0238">DNA-binding</keyword>
<keyword id="KW-0479">Metal-binding</keyword>
<keyword id="KW-0547">Nucleotide-binding</keyword>
<keyword id="KW-1185">Reference proteome</keyword>
<keyword id="KW-0678">Repressor</keyword>
<keyword id="KW-0804">Transcription</keyword>
<keyword id="KW-0805">Transcription regulation</keyword>
<keyword id="KW-0862">Zinc</keyword>
<keyword id="KW-0863">Zinc-finger</keyword>
<name>NRDR_ALKEH</name>
<protein>
    <recommendedName>
        <fullName evidence="1">Transcriptional repressor NrdR</fullName>
    </recommendedName>
</protein>
<reference key="1">
    <citation type="submission" date="2006-08" db="EMBL/GenBank/DDBJ databases">
        <title>Complete sequence of Alkalilimnicola ehrilichei MLHE-1.</title>
        <authorList>
            <person name="Copeland A."/>
            <person name="Lucas S."/>
            <person name="Lapidus A."/>
            <person name="Barry K."/>
            <person name="Detter J.C."/>
            <person name="Glavina del Rio T."/>
            <person name="Hammon N."/>
            <person name="Israni S."/>
            <person name="Dalin E."/>
            <person name="Tice H."/>
            <person name="Pitluck S."/>
            <person name="Sims D."/>
            <person name="Brettin T."/>
            <person name="Bruce D."/>
            <person name="Han C."/>
            <person name="Tapia R."/>
            <person name="Gilna P."/>
            <person name="Schmutz J."/>
            <person name="Larimer F."/>
            <person name="Land M."/>
            <person name="Hauser L."/>
            <person name="Kyrpides N."/>
            <person name="Mikhailova N."/>
            <person name="Oremland R.S."/>
            <person name="Hoeft S.E."/>
            <person name="Switzer-Blum J."/>
            <person name="Kulp T."/>
            <person name="King G."/>
            <person name="Tabita R."/>
            <person name="Witte B."/>
            <person name="Santini J.M."/>
            <person name="Basu P."/>
            <person name="Hollibaugh J.T."/>
            <person name="Xie G."/>
            <person name="Stolz J.F."/>
            <person name="Richardson P."/>
        </authorList>
    </citation>
    <scope>NUCLEOTIDE SEQUENCE [LARGE SCALE GENOMIC DNA]</scope>
    <source>
        <strain>ATCC BAA-1101 / DSM 17681 / MLHE-1</strain>
    </source>
</reference>
<sequence length="150" mass="17650">MRCPYCQFEDTRVIDSRLASEGEQVRRRRECNRCGERFTTYETAELALPRIVKRDGTREPWDEGKLRQGMLRALEKRPVATEAVEAALFRIRQRLRATGEREVSASQLGEWVMEELRELDQVAYVRFASVYRSFEDVSAFREVIEGLEKR</sequence>
<accession>Q0ABQ8</accession>
<dbReference type="EMBL" id="CP000453">
    <property type="protein sequence ID" value="ABI55729.1"/>
    <property type="status" value="ALT_INIT"/>
    <property type="molecule type" value="Genomic_DNA"/>
</dbReference>
<dbReference type="RefSeq" id="WP_041717871.1">
    <property type="nucleotide sequence ID" value="NC_008340.1"/>
</dbReference>
<dbReference type="SMR" id="Q0ABQ8"/>
<dbReference type="KEGG" id="aeh:Mlg_0374"/>
<dbReference type="eggNOG" id="COG1327">
    <property type="taxonomic scope" value="Bacteria"/>
</dbReference>
<dbReference type="HOGENOM" id="CLU_108412_0_0_6"/>
<dbReference type="OrthoDB" id="9807461at2"/>
<dbReference type="Proteomes" id="UP000001962">
    <property type="component" value="Chromosome"/>
</dbReference>
<dbReference type="GO" id="GO:0005524">
    <property type="term" value="F:ATP binding"/>
    <property type="evidence" value="ECO:0007669"/>
    <property type="project" value="UniProtKB-KW"/>
</dbReference>
<dbReference type="GO" id="GO:0003677">
    <property type="term" value="F:DNA binding"/>
    <property type="evidence" value="ECO:0007669"/>
    <property type="project" value="UniProtKB-KW"/>
</dbReference>
<dbReference type="GO" id="GO:0008270">
    <property type="term" value="F:zinc ion binding"/>
    <property type="evidence" value="ECO:0007669"/>
    <property type="project" value="UniProtKB-UniRule"/>
</dbReference>
<dbReference type="GO" id="GO:0045892">
    <property type="term" value="P:negative regulation of DNA-templated transcription"/>
    <property type="evidence" value="ECO:0007669"/>
    <property type="project" value="UniProtKB-UniRule"/>
</dbReference>
<dbReference type="HAMAP" id="MF_00440">
    <property type="entry name" value="NrdR"/>
    <property type="match status" value="1"/>
</dbReference>
<dbReference type="InterPro" id="IPR005144">
    <property type="entry name" value="ATP-cone_dom"/>
</dbReference>
<dbReference type="InterPro" id="IPR055173">
    <property type="entry name" value="NrdR-like_N"/>
</dbReference>
<dbReference type="InterPro" id="IPR003796">
    <property type="entry name" value="RNR_NrdR-like"/>
</dbReference>
<dbReference type="NCBIfam" id="TIGR00244">
    <property type="entry name" value="transcriptional regulator NrdR"/>
    <property type="match status" value="1"/>
</dbReference>
<dbReference type="PANTHER" id="PTHR30455">
    <property type="entry name" value="TRANSCRIPTIONAL REPRESSOR NRDR"/>
    <property type="match status" value="1"/>
</dbReference>
<dbReference type="PANTHER" id="PTHR30455:SF2">
    <property type="entry name" value="TRANSCRIPTIONAL REPRESSOR NRDR"/>
    <property type="match status" value="1"/>
</dbReference>
<dbReference type="Pfam" id="PF03477">
    <property type="entry name" value="ATP-cone"/>
    <property type="match status" value="1"/>
</dbReference>
<dbReference type="Pfam" id="PF22811">
    <property type="entry name" value="Zn_ribbon_NrdR"/>
    <property type="match status" value="1"/>
</dbReference>
<dbReference type="PROSITE" id="PS51161">
    <property type="entry name" value="ATP_CONE"/>
    <property type="match status" value="1"/>
</dbReference>
<feature type="chain" id="PRO_0000264158" description="Transcriptional repressor NrdR">
    <location>
        <begin position="1"/>
        <end position="150"/>
    </location>
</feature>
<feature type="domain" description="ATP-cone" evidence="1">
    <location>
        <begin position="49"/>
        <end position="139"/>
    </location>
</feature>
<feature type="zinc finger region" evidence="1">
    <location>
        <begin position="3"/>
        <end position="34"/>
    </location>
</feature>
<gene>
    <name evidence="1" type="primary">nrdR</name>
    <name type="ordered locus">Mlg_0374</name>
</gene>
<organism>
    <name type="scientific">Alkalilimnicola ehrlichii (strain ATCC BAA-1101 / DSM 17681 / MLHE-1)</name>
    <dbReference type="NCBI Taxonomy" id="187272"/>
    <lineage>
        <taxon>Bacteria</taxon>
        <taxon>Pseudomonadati</taxon>
        <taxon>Pseudomonadota</taxon>
        <taxon>Gammaproteobacteria</taxon>
        <taxon>Chromatiales</taxon>
        <taxon>Ectothiorhodospiraceae</taxon>
        <taxon>Alkalilimnicola</taxon>
    </lineage>
</organism>